<comment type="function">
    <text evidence="1">Catalyzes the condensation of the acetyl group of acetyl-CoA with 3-methyl-2-oxobutanoate (2-ketoisovalerate) to form 3-carboxy-3-hydroxy-4-methylpentanoate (2-isopropylmalate).</text>
</comment>
<comment type="catalytic activity">
    <reaction evidence="1">
        <text>3-methyl-2-oxobutanoate + acetyl-CoA + H2O = (2S)-2-isopropylmalate + CoA + H(+)</text>
        <dbReference type="Rhea" id="RHEA:21524"/>
        <dbReference type="ChEBI" id="CHEBI:1178"/>
        <dbReference type="ChEBI" id="CHEBI:11851"/>
        <dbReference type="ChEBI" id="CHEBI:15377"/>
        <dbReference type="ChEBI" id="CHEBI:15378"/>
        <dbReference type="ChEBI" id="CHEBI:57287"/>
        <dbReference type="ChEBI" id="CHEBI:57288"/>
        <dbReference type="EC" id="2.3.3.13"/>
    </reaction>
</comment>
<comment type="cofactor">
    <cofactor evidence="1">
        <name>Mg(2+)</name>
        <dbReference type="ChEBI" id="CHEBI:18420"/>
    </cofactor>
</comment>
<comment type="pathway">
    <text evidence="1">Amino-acid biosynthesis; L-leucine biosynthesis; L-leucine from 3-methyl-2-oxobutanoate: step 1/4.</text>
</comment>
<comment type="subunit">
    <text evidence="1">Homodimer.</text>
</comment>
<comment type="subcellular location">
    <subcellularLocation>
        <location evidence="1">Cytoplasm</location>
    </subcellularLocation>
</comment>
<comment type="similarity">
    <text evidence="1">Belongs to the alpha-IPM synthase/homocitrate synthase family. LeuA type 2 subfamily.</text>
</comment>
<organism>
    <name type="scientific">Rhodospirillum rubrum (strain ATCC 11170 / ATH 1.1.1 / DSM 467 / LMG 4362 / NCIMB 8255 / S1)</name>
    <dbReference type="NCBI Taxonomy" id="269796"/>
    <lineage>
        <taxon>Bacteria</taxon>
        <taxon>Pseudomonadati</taxon>
        <taxon>Pseudomonadota</taxon>
        <taxon>Alphaproteobacteria</taxon>
        <taxon>Rhodospirillales</taxon>
        <taxon>Rhodospirillaceae</taxon>
        <taxon>Rhodospirillum</taxon>
    </lineage>
</organism>
<accession>Q2RT17</accession>
<evidence type="ECO:0000255" key="1">
    <source>
        <dbReference type="HAMAP-Rule" id="MF_00572"/>
    </source>
</evidence>
<feature type="chain" id="PRO_1000129512" description="2-isopropylmalate synthase">
    <location>
        <begin position="1"/>
        <end position="558"/>
    </location>
</feature>
<feature type="domain" description="Pyruvate carboxyltransferase" evidence="1">
    <location>
        <begin position="31"/>
        <end position="306"/>
    </location>
</feature>
<feature type="region of interest" description="Regulatory domain" evidence="1">
    <location>
        <begin position="440"/>
        <end position="558"/>
    </location>
</feature>
<feature type="binding site" evidence="1">
    <location>
        <position position="40"/>
    </location>
    <ligand>
        <name>Mg(2+)</name>
        <dbReference type="ChEBI" id="CHEBI:18420"/>
    </ligand>
</feature>
<feature type="binding site" evidence="1">
    <location>
        <position position="245"/>
    </location>
    <ligand>
        <name>Mg(2+)</name>
        <dbReference type="ChEBI" id="CHEBI:18420"/>
    </ligand>
</feature>
<feature type="binding site" evidence="1">
    <location>
        <position position="247"/>
    </location>
    <ligand>
        <name>Mg(2+)</name>
        <dbReference type="ChEBI" id="CHEBI:18420"/>
    </ligand>
</feature>
<feature type="binding site" evidence="1">
    <location>
        <position position="281"/>
    </location>
    <ligand>
        <name>Mg(2+)</name>
        <dbReference type="ChEBI" id="CHEBI:18420"/>
    </ligand>
</feature>
<name>LEU1_RHORT</name>
<gene>
    <name evidence="1" type="primary">leuA</name>
    <name type="ordered locus">Rru_A1928</name>
</gene>
<dbReference type="EC" id="2.3.3.13" evidence="1"/>
<dbReference type="EMBL" id="CP000230">
    <property type="protein sequence ID" value="ABC22728.1"/>
    <property type="molecule type" value="Genomic_DNA"/>
</dbReference>
<dbReference type="RefSeq" id="WP_011389681.1">
    <property type="nucleotide sequence ID" value="NC_007643.1"/>
</dbReference>
<dbReference type="RefSeq" id="YP_427015.1">
    <property type="nucleotide sequence ID" value="NC_007643.1"/>
</dbReference>
<dbReference type="SMR" id="Q2RT17"/>
<dbReference type="STRING" id="269796.Rru_A1928"/>
<dbReference type="EnsemblBacteria" id="ABC22728">
    <property type="protein sequence ID" value="ABC22728"/>
    <property type="gene ID" value="Rru_A1928"/>
</dbReference>
<dbReference type="KEGG" id="rru:Rru_A1928"/>
<dbReference type="PATRIC" id="fig|269796.9.peg.2011"/>
<dbReference type="eggNOG" id="COG0119">
    <property type="taxonomic scope" value="Bacteria"/>
</dbReference>
<dbReference type="HOGENOM" id="CLU_004588_3_0_5"/>
<dbReference type="PhylomeDB" id="Q2RT17"/>
<dbReference type="UniPathway" id="UPA00048">
    <property type="reaction ID" value="UER00070"/>
</dbReference>
<dbReference type="Proteomes" id="UP000001929">
    <property type="component" value="Chromosome"/>
</dbReference>
<dbReference type="GO" id="GO:0005737">
    <property type="term" value="C:cytoplasm"/>
    <property type="evidence" value="ECO:0007669"/>
    <property type="project" value="UniProtKB-SubCell"/>
</dbReference>
<dbReference type="GO" id="GO:0003852">
    <property type="term" value="F:2-isopropylmalate synthase activity"/>
    <property type="evidence" value="ECO:0007669"/>
    <property type="project" value="UniProtKB-UniRule"/>
</dbReference>
<dbReference type="GO" id="GO:0003985">
    <property type="term" value="F:acetyl-CoA C-acetyltransferase activity"/>
    <property type="evidence" value="ECO:0007669"/>
    <property type="project" value="UniProtKB-UniRule"/>
</dbReference>
<dbReference type="GO" id="GO:0000287">
    <property type="term" value="F:magnesium ion binding"/>
    <property type="evidence" value="ECO:0007669"/>
    <property type="project" value="UniProtKB-UniRule"/>
</dbReference>
<dbReference type="GO" id="GO:0009098">
    <property type="term" value="P:L-leucine biosynthetic process"/>
    <property type="evidence" value="ECO:0007669"/>
    <property type="project" value="UniProtKB-UniRule"/>
</dbReference>
<dbReference type="CDD" id="cd07942">
    <property type="entry name" value="DRE_TIM_LeuA"/>
    <property type="match status" value="1"/>
</dbReference>
<dbReference type="FunFam" id="3.20.20.70:FF:000045">
    <property type="entry name" value="2-isopropylmalate synthase"/>
    <property type="match status" value="1"/>
</dbReference>
<dbReference type="Gene3D" id="3.30.160.270">
    <property type="match status" value="1"/>
</dbReference>
<dbReference type="Gene3D" id="3.20.20.70">
    <property type="entry name" value="Aldolase class I"/>
    <property type="match status" value="1"/>
</dbReference>
<dbReference type="HAMAP" id="MF_00572">
    <property type="entry name" value="LeuA_type2"/>
    <property type="match status" value="1"/>
</dbReference>
<dbReference type="InterPro" id="IPR013709">
    <property type="entry name" value="2-isopropylmalate_synth_dimer"/>
</dbReference>
<dbReference type="InterPro" id="IPR002034">
    <property type="entry name" value="AIPM/Hcit_synth_CS"/>
</dbReference>
<dbReference type="InterPro" id="IPR013785">
    <property type="entry name" value="Aldolase_TIM"/>
</dbReference>
<dbReference type="InterPro" id="IPR005668">
    <property type="entry name" value="IPM_Synthase"/>
</dbReference>
<dbReference type="InterPro" id="IPR054692">
    <property type="entry name" value="LeuA-like_post-cat"/>
</dbReference>
<dbReference type="InterPro" id="IPR036230">
    <property type="entry name" value="LeuA_allosteric_dom_sf"/>
</dbReference>
<dbReference type="InterPro" id="IPR039371">
    <property type="entry name" value="LeuA_N_DRE-TIM"/>
</dbReference>
<dbReference type="InterPro" id="IPR000891">
    <property type="entry name" value="PYR_CT"/>
</dbReference>
<dbReference type="NCBIfam" id="TIGR00970">
    <property type="entry name" value="leuA_yeast"/>
    <property type="match status" value="1"/>
</dbReference>
<dbReference type="NCBIfam" id="NF002991">
    <property type="entry name" value="PRK03739.1"/>
    <property type="match status" value="1"/>
</dbReference>
<dbReference type="PANTHER" id="PTHR46911">
    <property type="match status" value="1"/>
</dbReference>
<dbReference type="PANTHER" id="PTHR46911:SF1">
    <property type="entry name" value="2-ISOPROPYLMALATE SYNTHASE"/>
    <property type="match status" value="1"/>
</dbReference>
<dbReference type="Pfam" id="PF00682">
    <property type="entry name" value="HMGL-like"/>
    <property type="match status" value="1"/>
</dbReference>
<dbReference type="Pfam" id="PF22615">
    <property type="entry name" value="IPMS_D2"/>
    <property type="match status" value="1"/>
</dbReference>
<dbReference type="Pfam" id="PF08502">
    <property type="entry name" value="LeuA_dimer"/>
    <property type="match status" value="1"/>
</dbReference>
<dbReference type="SMART" id="SM00917">
    <property type="entry name" value="LeuA_dimer"/>
    <property type="match status" value="1"/>
</dbReference>
<dbReference type="SUPFAM" id="SSF110921">
    <property type="entry name" value="2-isopropylmalate synthase LeuA, allosteric (dimerisation) domain"/>
    <property type="match status" value="1"/>
</dbReference>
<dbReference type="SUPFAM" id="SSF51569">
    <property type="entry name" value="Aldolase"/>
    <property type="match status" value="1"/>
</dbReference>
<dbReference type="SUPFAM" id="SSF89000">
    <property type="entry name" value="post-HMGL domain-like"/>
    <property type="match status" value="1"/>
</dbReference>
<dbReference type="PROSITE" id="PS00815">
    <property type="entry name" value="AIPM_HOMOCIT_SYNTH_1"/>
    <property type="match status" value="1"/>
</dbReference>
<dbReference type="PROSITE" id="PS00816">
    <property type="entry name" value="AIPM_HOMOCIT_SYNTH_2"/>
    <property type="match status" value="1"/>
</dbReference>
<dbReference type="PROSITE" id="PS50991">
    <property type="entry name" value="PYR_CT"/>
    <property type="match status" value="1"/>
</dbReference>
<sequence>MMIDPSKKYRPFPPVALADRTWPSATITKAPIWCAVDLRDGNQALVEPMGADRKVRMFQLLCELGYKEIEVGFPSASQTDFDFLRQLIERDMIPADVTIQVLTQAREDLISRTFQALEGASSAIVHLYNSTSTLQRRVVFALDRAGITDLAVRGAEMVREGAAKASASTKLRFQYSPESFTGTELDYAVEICEAVMGVFEPTAEAPLILNLPSTVEMATPNVYADQIEWFCRALPHRDRVLISLHPHNDRGTAVAAAELALMAGADRIEGTLFGNGERTGNVDLVTLGMNMFTQGIDPGIDFSNIDHIREIAEECNRLPVHPRHPYAGDLVFTAFSGSHQDAINKGLHAMEKTNQDVWEVPYLPIDPKDIGRSYEAVIRVNSQSGKGGVAHILERDYGIRMPRGLQVEFSKVVQAITDTTGEEITSRGLWKTFEETYLGAGSPYSFLEHHTRPDPAGKDQRILTATVKAGGKVRDIDGRGTGPIEALVDALRKDSGLAITIEDYEEHTLRPGSDAQAVAFIKASLPDGRAHYGVGIDANFVVASLKAVLCAANHLSDK</sequence>
<reference key="1">
    <citation type="journal article" date="2011" name="Stand. Genomic Sci.">
        <title>Complete genome sequence of Rhodospirillum rubrum type strain (S1).</title>
        <authorList>
            <person name="Munk A.C."/>
            <person name="Copeland A."/>
            <person name="Lucas S."/>
            <person name="Lapidus A."/>
            <person name="Del Rio T.G."/>
            <person name="Barry K."/>
            <person name="Detter J.C."/>
            <person name="Hammon N."/>
            <person name="Israni S."/>
            <person name="Pitluck S."/>
            <person name="Brettin T."/>
            <person name="Bruce D."/>
            <person name="Han C."/>
            <person name="Tapia R."/>
            <person name="Gilna P."/>
            <person name="Schmutz J."/>
            <person name="Larimer F."/>
            <person name="Land M."/>
            <person name="Kyrpides N.C."/>
            <person name="Mavromatis K."/>
            <person name="Richardson P."/>
            <person name="Rohde M."/>
            <person name="Goeker M."/>
            <person name="Klenk H.P."/>
            <person name="Zhang Y."/>
            <person name="Roberts G.P."/>
            <person name="Reslewic S."/>
            <person name="Schwartz D.C."/>
        </authorList>
    </citation>
    <scope>NUCLEOTIDE SEQUENCE [LARGE SCALE GENOMIC DNA]</scope>
    <source>
        <strain>ATCC 11170 / ATH 1.1.1 / DSM 467 / LMG 4362 / NCIMB 8255 / S1</strain>
    </source>
</reference>
<proteinExistence type="inferred from homology"/>
<keyword id="KW-0028">Amino-acid biosynthesis</keyword>
<keyword id="KW-0100">Branched-chain amino acid biosynthesis</keyword>
<keyword id="KW-0963">Cytoplasm</keyword>
<keyword id="KW-0432">Leucine biosynthesis</keyword>
<keyword id="KW-0460">Magnesium</keyword>
<keyword id="KW-0479">Metal-binding</keyword>
<keyword id="KW-1185">Reference proteome</keyword>
<keyword id="KW-0808">Transferase</keyword>
<protein>
    <recommendedName>
        <fullName evidence="1">2-isopropylmalate synthase</fullName>
        <ecNumber evidence="1">2.3.3.13</ecNumber>
    </recommendedName>
    <alternativeName>
        <fullName evidence="1">Alpha-IPM synthase</fullName>
    </alternativeName>
    <alternativeName>
        <fullName evidence="1">Alpha-isopropylmalate synthase</fullName>
    </alternativeName>
</protein>